<feature type="chain" id="PRO_0000390275" description="NADH-quinone oxidoreductase subunit K">
    <location>
        <begin position="1"/>
        <end position="101"/>
    </location>
</feature>
<feature type="transmembrane region" description="Helical" evidence="1">
    <location>
        <begin position="4"/>
        <end position="24"/>
    </location>
</feature>
<feature type="transmembrane region" description="Helical" evidence="1">
    <location>
        <begin position="30"/>
        <end position="50"/>
    </location>
</feature>
<feature type="transmembrane region" description="Helical" evidence="1">
    <location>
        <begin position="62"/>
        <end position="82"/>
    </location>
</feature>
<gene>
    <name evidence="1" type="primary">nuoK</name>
    <name type="ordered locus">xcc-b100_1643</name>
</gene>
<reference key="1">
    <citation type="journal article" date="2008" name="J. Biotechnol.">
        <title>The genome of Xanthomonas campestris pv. campestris B100 and its use for the reconstruction of metabolic pathways involved in xanthan biosynthesis.</title>
        <authorList>
            <person name="Vorhoelter F.-J."/>
            <person name="Schneiker S."/>
            <person name="Goesmann A."/>
            <person name="Krause L."/>
            <person name="Bekel T."/>
            <person name="Kaiser O."/>
            <person name="Linke B."/>
            <person name="Patschkowski T."/>
            <person name="Rueckert C."/>
            <person name="Schmid J."/>
            <person name="Sidhu V.K."/>
            <person name="Sieber V."/>
            <person name="Tauch A."/>
            <person name="Watt S.A."/>
            <person name="Weisshaar B."/>
            <person name="Becker A."/>
            <person name="Niehaus K."/>
            <person name="Puehler A."/>
        </authorList>
    </citation>
    <scope>NUCLEOTIDE SEQUENCE [LARGE SCALE GENOMIC DNA]</scope>
    <source>
        <strain>B100</strain>
    </source>
</reference>
<proteinExistence type="inferred from homology"/>
<comment type="function">
    <text evidence="1">NDH-1 shuttles electrons from NADH, via FMN and iron-sulfur (Fe-S) centers, to quinones in the respiratory chain. The immediate electron acceptor for the enzyme in this species is believed to be ubiquinone. Couples the redox reaction to proton translocation (for every two electrons transferred, four hydrogen ions are translocated across the cytoplasmic membrane), and thus conserves the redox energy in a proton gradient.</text>
</comment>
<comment type="catalytic activity">
    <reaction evidence="1">
        <text>a quinone + NADH + 5 H(+)(in) = a quinol + NAD(+) + 4 H(+)(out)</text>
        <dbReference type="Rhea" id="RHEA:57888"/>
        <dbReference type="ChEBI" id="CHEBI:15378"/>
        <dbReference type="ChEBI" id="CHEBI:24646"/>
        <dbReference type="ChEBI" id="CHEBI:57540"/>
        <dbReference type="ChEBI" id="CHEBI:57945"/>
        <dbReference type="ChEBI" id="CHEBI:132124"/>
    </reaction>
</comment>
<comment type="subunit">
    <text evidence="1">NDH-1 is composed of 14 different subunits. Subunits NuoA, H, J, K, L, M, N constitute the membrane sector of the complex.</text>
</comment>
<comment type="subcellular location">
    <subcellularLocation>
        <location evidence="1">Cell inner membrane</location>
        <topology evidence="1">Multi-pass membrane protein</topology>
    </subcellularLocation>
</comment>
<comment type="similarity">
    <text evidence="1">Belongs to the complex I subunit 4L family.</text>
</comment>
<evidence type="ECO:0000255" key="1">
    <source>
        <dbReference type="HAMAP-Rule" id="MF_01456"/>
    </source>
</evidence>
<organism>
    <name type="scientific">Xanthomonas campestris pv. campestris (strain B100)</name>
    <dbReference type="NCBI Taxonomy" id="509169"/>
    <lineage>
        <taxon>Bacteria</taxon>
        <taxon>Pseudomonadati</taxon>
        <taxon>Pseudomonadota</taxon>
        <taxon>Gammaproteobacteria</taxon>
        <taxon>Lysobacterales</taxon>
        <taxon>Lysobacteraceae</taxon>
        <taxon>Xanthomonas</taxon>
    </lineage>
</organism>
<accession>B0RRA8</accession>
<keyword id="KW-0997">Cell inner membrane</keyword>
<keyword id="KW-1003">Cell membrane</keyword>
<keyword id="KW-0472">Membrane</keyword>
<keyword id="KW-0520">NAD</keyword>
<keyword id="KW-0874">Quinone</keyword>
<keyword id="KW-1278">Translocase</keyword>
<keyword id="KW-0812">Transmembrane</keyword>
<keyword id="KW-1133">Transmembrane helix</keyword>
<keyword id="KW-0813">Transport</keyword>
<keyword id="KW-0830">Ubiquinone</keyword>
<protein>
    <recommendedName>
        <fullName evidence="1">NADH-quinone oxidoreductase subunit K</fullName>
        <ecNumber evidence="1">7.1.1.-</ecNumber>
    </recommendedName>
    <alternativeName>
        <fullName evidence="1">NADH dehydrogenase I subunit K</fullName>
    </alternativeName>
    <alternativeName>
        <fullName evidence="1">NDH-1 subunit K</fullName>
    </alternativeName>
</protein>
<name>NUOK_XANCB</name>
<sequence length="101" mass="10879">MITLGHLLGLGAVLFCISLAGIFLNRKNVIVLLMSIELMLLSVNVNFIAFSRELGDTAGQLFVFFILTVAAAEAAIGLAILVTLFRTRRTINVAEVDTLKG</sequence>
<dbReference type="EC" id="7.1.1.-" evidence="1"/>
<dbReference type="EMBL" id="AM920689">
    <property type="protein sequence ID" value="CAP50993.1"/>
    <property type="molecule type" value="Genomic_DNA"/>
</dbReference>
<dbReference type="SMR" id="B0RRA8"/>
<dbReference type="KEGG" id="xca:xcc-b100_1643"/>
<dbReference type="HOGENOM" id="CLU_144724_2_0_6"/>
<dbReference type="Proteomes" id="UP000001188">
    <property type="component" value="Chromosome"/>
</dbReference>
<dbReference type="GO" id="GO:0030964">
    <property type="term" value="C:NADH dehydrogenase complex"/>
    <property type="evidence" value="ECO:0007669"/>
    <property type="project" value="TreeGrafter"/>
</dbReference>
<dbReference type="GO" id="GO:0005886">
    <property type="term" value="C:plasma membrane"/>
    <property type="evidence" value="ECO:0007669"/>
    <property type="project" value="UniProtKB-SubCell"/>
</dbReference>
<dbReference type="GO" id="GO:0050136">
    <property type="term" value="F:NADH:ubiquinone reductase (non-electrogenic) activity"/>
    <property type="evidence" value="ECO:0007669"/>
    <property type="project" value="UniProtKB-UniRule"/>
</dbReference>
<dbReference type="GO" id="GO:0048038">
    <property type="term" value="F:quinone binding"/>
    <property type="evidence" value="ECO:0007669"/>
    <property type="project" value="UniProtKB-KW"/>
</dbReference>
<dbReference type="GO" id="GO:0042773">
    <property type="term" value="P:ATP synthesis coupled electron transport"/>
    <property type="evidence" value="ECO:0007669"/>
    <property type="project" value="InterPro"/>
</dbReference>
<dbReference type="FunFam" id="1.10.287.3510:FF:000001">
    <property type="entry name" value="NADH-quinone oxidoreductase subunit K"/>
    <property type="match status" value="1"/>
</dbReference>
<dbReference type="Gene3D" id="1.10.287.3510">
    <property type="match status" value="1"/>
</dbReference>
<dbReference type="HAMAP" id="MF_01456">
    <property type="entry name" value="NDH1_NuoK"/>
    <property type="match status" value="1"/>
</dbReference>
<dbReference type="InterPro" id="IPR001133">
    <property type="entry name" value="NADH_UbQ_OxRdtase_chain4L/K"/>
</dbReference>
<dbReference type="InterPro" id="IPR039428">
    <property type="entry name" value="NUOK/Mnh_C1-like"/>
</dbReference>
<dbReference type="NCBIfam" id="NF004320">
    <property type="entry name" value="PRK05715.1-2"/>
    <property type="match status" value="1"/>
</dbReference>
<dbReference type="NCBIfam" id="NF004321">
    <property type="entry name" value="PRK05715.1-3"/>
    <property type="match status" value="1"/>
</dbReference>
<dbReference type="NCBIfam" id="NF004323">
    <property type="entry name" value="PRK05715.1-5"/>
    <property type="match status" value="1"/>
</dbReference>
<dbReference type="PANTHER" id="PTHR11434:SF21">
    <property type="entry name" value="NADH DEHYDROGENASE SUBUNIT 4L-RELATED"/>
    <property type="match status" value="1"/>
</dbReference>
<dbReference type="PANTHER" id="PTHR11434">
    <property type="entry name" value="NADH-UBIQUINONE OXIDOREDUCTASE SUBUNIT ND4L"/>
    <property type="match status" value="1"/>
</dbReference>
<dbReference type="Pfam" id="PF00420">
    <property type="entry name" value="Oxidored_q2"/>
    <property type="match status" value="1"/>
</dbReference>